<protein>
    <recommendedName>
        <fullName>GATA zinc finger domain-containing protein 13</fullName>
    </recommendedName>
</protein>
<evidence type="ECO:0000255" key="1"/>
<evidence type="ECO:0000256" key="2">
    <source>
        <dbReference type="SAM" id="MobiDB-lite"/>
    </source>
</evidence>
<gene>
    <name type="primary">gtaM</name>
    <name type="ORF">DDB_G0286837</name>
</gene>
<reference key="1">
    <citation type="journal article" date="2005" name="Nature">
        <title>The genome of the social amoeba Dictyostelium discoideum.</title>
        <authorList>
            <person name="Eichinger L."/>
            <person name="Pachebat J.A."/>
            <person name="Gloeckner G."/>
            <person name="Rajandream M.A."/>
            <person name="Sucgang R."/>
            <person name="Berriman M."/>
            <person name="Song J."/>
            <person name="Olsen R."/>
            <person name="Szafranski K."/>
            <person name="Xu Q."/>
            <person name="Tunggal B."/>
            <person name="Kummerfeld S."/>
            <person name="Madera M."/>
            <person name="Konfortov B.A."/>
            <person name="Rivero F."/>
            <person name="Bankier A.T."/>
            <person name="Lehmann R."/>
            <person name="Hamlin N."/>
            <person name="Davies R."/>
            <person name="Gaudet P."/>
            <person name="Fey P."/>
            <person name="Pilcher K."/>
            <person name="Chen G."/>
            <person name="Saunders D."/>
            <person name="Sodergren E.J."/>
            <person name="Davis P."/>
            <person name="Kerhornou A."/>
            <person name="Nie X."/>
            <person name="Hall N."/>
            <person name="Anjard C."/>
            <person name="Hemphill L."/>
            <person name="Bason N."/>
            <person name="Farbrother P."/>
            <person name="Desany B."/>
            <person name="Just E."/>
            <person name="Morio T."/>
            <person name="Rost R."/>
            <person name="Churcher C.M."/>
            <person name="Cooper J."/>
            <person name="Haydock S."/>
            <person name="van Driessche N."/>
            <person name="Cronin A."/>
            <person name="Goodhead I."/>
            <person name="Muzny D.M."/>
            <person name="Mourier T."/>
            <person name="Pain A."/>
            <person name="Lu M."/>
            <person name="Harper D."/>
            <person name="Lindsay R."/>
            <person name="Hauser H."/>
            <person name="James K.D."/>
            <person name="Quiles M."/>
            <person name="Madan Babu M."/>
            <person name="Saito T."/>
            <person name="Buchrieser C."/>
            <person name="Wardroper A."/>
            <person name="Felder M."/>
            <person name="Thangavelu M."/>
            <person name="Johnson D."/>
            <person name="Knights A."/>
            <person name="Loulseged H."/>
            <person name="Mungall K.L."/>
            <person name="Oliver K."/>
            <person name="Price C."/>
            <person name="Quail M.A."/>
            <person name="Urushihara H."/>
            <person name="Hernandez J."/>
            <person name="Rabbinowitsch E."/>
            <person name="Steffen D."/>
            <person name="Sanders M."/>
            <person name="Ma J."/>
            <person name="Kohara Y."/>
            <person name="Sharp S."/>
            <person name="Simmonds M.N."/>
            <person name="Spiegler S."/>
            <person name="Tivey A."/>
            <person name="Sugano S."/>
            <person name="White B."/>
            <person name="Walker D."/>
            <person name="Woodward J.R."/>
            <person name="Winckler T."/>
            <person name="Tanaka Y."/>
            <person name="Shaulsky G."/>
            <person name="Schleicher M."/>
            <person name="Weinstock G.M."/>
            <person name="Rosenthal A."/>
            <person name="Cox E.C."/>
            <person name="Chisholm R.L."/>
            <person name="Gibbs R.A."/>
            <person name="Loomis W.F."/>
            <person name="Platzer M."/>
            <person name="Kay R.R."/>
            <person name="Williams J.G."/>
            <person name="Dear P.H."/>
            <person name="Noegel A.A."/>
            <person name="Barrell B.G."/>
            <person name="Kuspa A."/>
        </authorList>
    </citation>
    <scope>NUCLEOTIDE SEQUENCE [LARGE SCALE GENOMIC DNA]</scope>
    <source>
        <strain>AX4</strain>
    </source>
</reference>
<accession>Q54L83</accession>
<feature type="chain" id="PRO_0000330446" description="GATA zinc finger domain-containing protein 13">
    <location>
        <begin position="1"/>
        <end position="508"/>
    </location>
</feature>
<feature type="zinc finger region" description="GATA-type">
    <location>
        <begin position="327"/>
        <end position="354"/>
    </location>
</feature>
<feature type="region of interest" description="Disordered" evidence="2">
    <location>
        <begin position="20"/>
        <end position="51"/>
    </location>
</feature>
<feature type="region of interest" description="Disordered" evidence="2">
    <location>
        <begin position="203"/>
        <end position="296"/>
    </location>
</feature>
<feature type="region of interest" description="Disordered" evidence="2">
    <location>
        <begin position="399"/>
        <end position="484"/>
    </location>
</feature>
<feature type="coiled-coil region" evidence="1">
    <location>
        <begin position="356"/>
        <end position="433"/>
    </location>
</feature>
<feature type="compositionally biased region" description="Low complexity" evidence="2">
    <location>
        <begin position="23"/>
        <end position="51"/>
    </location>
</feature>
<feature type="compositionally biased region" description="Polar residues" evidence="2">
    <location>
        <begin position="203"/>
        <end position="224"/>
    </location>
</feature>
<feature type="compositionally biased region" description="Low complexity" evidence="2">
    <location>
        <begin position="225"/>
        <end position="247"/>
    </location>
</feature>
<feature type="compositionally biased region" description="Polar residues" evidence="2">
    <location>
        <begin position="248"/>
        <end position="266"/>
    </location>
</feature>
<feature type="compositionally biased region" description="Basic residues" evidence="2">
    <location>
        <begin position="269"/>
        <end position="279"/>
    </location>
</feature>
<feature type="compositionally biased region" description="Low complexity" evidence="2">
    <location>
        <begin position="399"/>
        <end position="482"/>
    </location>
</feature>
<proteinExistence type="predicted"/>
<keyword id="KW-0175">Coiled coil</keyword>
<keyword id="KW-0479">Metal-binding</keyword>
<keyword id="KW-1185">Reference proteome</keyword>
<keyword id="KW-0862">Zinc</keyword>
<keyword id="KW-0863">Zinc-finger</keyword>
<organism>
    <name type="scientific">Dictyostelium discoideum</name>
    <name type="common">Social amoeba</name>
    <dbReference type="NCBI Taxonomy" id="44689"/>
    <lineage>
        <taxon>Eukaryota</taxon>
        <taxon>Amoebozoa</taxon>
        <taxon>Evosea</taxon>
        <taxon>Eumycetozoa</taxon>
        <taxon>Dictyostelia</taxon>
        <taxon>Dictyosteliales</taxon>
        <taxon>Dictyosteliaceae</taxon>
        <taxon>Dictyostelium</taxon>
    </lineage>
</organism>
<name>GTAM_DICDI</name>
<dbReference type="EMBL" id="AAFI02000090">
    <property type="protein sequence ID" value="EAL64016.1"/>
    <property type="molecule type" value="Genomic_DNA"/>
</dbReference>
<dbReference type="RefSeq" id="XP_637520.1">
    <property type="nucleotide sequence ID" value="XM_632428.1"/>
</dbReference>
<dbReference type="PaxDb" id="44689-DDB0233426"/>
<dbReference type="EnsemblProtists" id="EAL64016">
    <property type="protein sequence ID" value="EAL64016"/>
    <property type="gene ID" value="DDB_G0286837"/>
</dbReference>
<dbReference type="GeneID" id="8625818"/>
<dbReference type="KEGG" id="ddi:DDB_G0286837"/>
<dbReference type="dictyBase" id="DDB_G0286837">
    <property type="gene designation" value="gtaM"/>
</dbReference>
<dbReference type="VEuPathDB" id="AmoebaDB:DDB_G0286837"/>
<dbReference type="HOGENOM" id="CLU_536862_0_0_1"/>
<dbReference type="InParanoid" id="Q54L83"/>
<dbReference type="PRO" id="PR:Q54L83"/>
<dbReference type="Proteomes" id="UP000002195">
    <property type="component" value="Chromosome 4"/>
</dbReference>
<dbReference type="GO" id="GO:0043565">
    <property type="term" value="F:sequence-specific DNA binding"/>
    <property type="evidence" value="ECO:0007669"/>
    <property type="project" value="InterPro"/>
</dbReference>
<dbReference type="GO" id="GO:0008270">
    <property type="term" value="F:zinc ion binding"/>
    <property type="evidence" value="ECO:0007669"/>
    <property type="project" value="UniProtKB-KW"/>
</dbReference>
<dbReference type="GO" id="GO:0140582">
    <property type="term" value="P:adenylate cyclase-activating G protein-coupled cAMP receptor signaling pathway"/>
    <property type="evidence" value="ECO:0000314"/>
    <property type="project" value="dictyBase"/>
</dbReference>
<dbReference type="GO" id="GO:0006355">
    <property type="term" value="P:regulation of DNA-templated transcription"/>
    <property type="evidence" value="ECO:0007669"/>
    <property type="project" value="InterPro"/>
</dbReference>
<dbReference type="Gene3D" id="3.30.50.10">
    <property type="entry name" value="Erythroid Transcription Factor GATA-1, subunit A"/>
    <property type="match status" value="1"/>
</dbReference>
<dbReference type="InterPro" id="IPR000679">
    <property type="entry name" value="Znf_GATA"/>
</dbReference>
<dbReference type="InterPro" id="IPR013088">
    <property type="entry name" value="Znf_NHR/GATA"/>
</dbReference>
<dbReference type="SMART" id="SM00401">
    <property type="entry name" value="ZnF_GATA"/>
    <property type="match status" value="1"/>
</dbReference>
<dbReference type="SUPFAM" id="SSF57716">
    <property type="entry name" value="Glucocorticoid receptor-like (DNA-binding domain)"/>
    <property type="match status" value="1"/>
</dbReference>
<dbReference type="PROSITE" id="PS00344">
    <property type="entry name" value="GATA_ZN_FINGER_1"/>
    <property type="match status" value="1"/>
</dbReference>
<sequence length="508" mass="58389">MENQKKNNFNQIDYFRWADYSKNNNNNNNNNNNNNINNNNNNNNNNNINNNIDNNNSFYRFISPPFNKINNNNNANNFNNINNNNNNNFNNYQLNDGNKISINNILNDNTTTTNTSANQNSANTNKTYNFSKNENGIVYEIDNFILDSNLVREQPFNNFNYLNIINNIQNFLQLISGKVNLLNVILGILVDDVNRYSVNPNSMSIIPSDNFPTPQLPLETNTDLNNTSDCSSTTFSSPPSSAFNSPNLQNDYTQPQNQKSQSSTIVKKNSSKSKSKNNKQSKDDGETNDGESPEIEEKRVIRLDMNLNPNPTIPKRGRPLKVRPFECSICKIKCSIYWRRILINEVRTSVCNACGLRTMKKTKKENIEKKKNKISNILNDHNSEIDNQIIIYLNQKKTTTTTTTTTTSSTNNLNNNNNNNNNNNNNNNNNNNNNNNNNNNDNNNNDNNNNDNNNNDNNNNNNNNNNNNNNNNNNNNNDNYNDSIYSRLYSDDYEDEYYEGEEYENEDE</sequence>